<sequence length="994" mass="109654">MVLDKILRAGEGRILRKLKAIAEQVNLIEDDFTGLSDGELRGMTDEFRQRLADGKETLDDLLPEAFAAVREAARRTLGQRHFDVQIMGGAALHLGNIAEMKTGEGKTLVSTLPTYLNALAGKGVHVITVNDYLAQRDAENMGRVHRFLGLTVGVIHPQMPPPVRRAQYACDITYGTNNEFGFDYLRDNMAWSSEELVQRGHNFAVVDEVDSILIDEARTPLIISGPADHPTRWYTEFARIAPLLERDVDYEVEEGKRTVAITESGVEKVEDQLGIENLYESVNTPLVGYLNNSLKAKELYKRDKDYIVTDGEVLIVDEFTGRVLHGRRYSEGMHQAIEAKEKVEIKQENQTLATITLQNYFRLYDKLSGMTGTAMTEAAEFHQIYSLGVVPIPTNKPMVRLDQPDVVYKTEIAKFDAVVEDIAERHEKGQPVLVGTTSVEKSEYLSKQLRKRGVPHEVLNAKHHEREAAIIAEAGRKGAVTVATNMAGRGTDIMLGGNPEFIAQAELRQRGLSPIETPEDYEAAWQEALEKARQSVKAEHEEVVDAGGLYVLGTERHESRRIDNQLRGRAGRQGDRGESRFYLSLGDDLMRLFNAAAVEGIMDRLNIPEDVPIESKIVTRAIRSAQTQVEGQNFEIRKNVLKYDEVMNKQRTVIYEERRKVLGGADLHEQVRHFVDDTVEGYVRGATADGYPEEWDLDTLWTALGQLYPVGVVAPDVDDRDGLTADHLLEDIQVDAQEAYDRRELDLGDGPDSEPIMRELERRVVLAVLDRKWREHLYEMDYLQEGIGLRAMGQRDPLVEYQREGFDMFQTMMEGIKEESVRLLFNVEVQVAGQEEAATSVGVEPAVSAAPAPPAAAATLPAPAVPTIPDGAGPVADAQPVRPAAARQTPPPPSPVPSAPLPVFVKGLEPRRPTGGLRYTAPSVDGGSGPVTTVDGRSGLGRPAGDGALSAARGEAGTAQPGAGTRPARNAPCPCGSGRKYKRCHGDPARRNTE</sequence>
<protein>
    <recommendedName>
        <fullName evidence="1">Protein translocase subunit SecA</fullName>
        <ecNumber evidence="1">7.4.2.8</ecNumber>
    </recommendedName>
</protein>
<dbReference type="EC" id="7.4.2.8" evidence="1"/>
<dbReference type="EMBL" id="CP000249">
    <property type="protein sequence ID" value="ABD10151.1"/>
    <property type="molecule type" value="Genomic_DNA"/>
</dbReference>
<dbReference type="RefSeq" id="WP_011435220.1">
    <property type="nucleotide sequence ID" value="NZ_JENI01000002.1"/>
</dbReference>
<dbReference type="SMR" id="Q2JEZ1"/>
<dbReference type="STRING" id="106370.Francci3_0767"/>
<dbReference type="KEGG" id="fra:Francci3_0767"/>
<dbReference type="eggNOG" id="COG0653">
    <property type="taxonomic scope" value="Bacteria"/>
</dbReference>
<dbReference type="HOGENOM" id="CLU_005314_3_0_11"/>
<dbReference type="OrthoDB" id="9805579at2"/>
<dbReference type="PhylomeDB" id="Q2JEZ1"/>
<dbReference type="Proteomes" id="UP000001937">
    <property type="component" value="Chromosome"/>
</dbReference>
<dbReference type="GO" id="GO:0031522">
    <property type="term" value="C:cell envelope Sec protein transport complex"/>
    <property type="evidence" value="ECO:0007669"/>
    <property type="project" value="TreeGrafter"/>
</dbReference>
<dbReference type="GO" id="GO:0005829">
    <property type="term" value="C:cytosol"/>
    <property type="evidence" value="ECO:0007669"/>
    <property type="project" value="TreeGrafter"/>
</dbReference>
<dbReference type="GO" id="GO:0005886">
    <property type="term" value="C:plasma membrane"/>
    <property type="evidence" value="ECO:0007669"/>
    <property type="project" value="UniProtKB-SubCell"/>
</dbReference>
<dbReference type="GO" id="GO:0005524">
    <property type="term" value="F:ATP binding"/>
    <property type="evidence" value="ECO:0007669"/>
    <property type="project" value="UniProtKB-UniRule"/>
</dbReference>
<dbReference type="GO" id="GO:0046872">
    <property type="term" value="F:metal ion binding"/>
    <property type="evidence" value="ECO:0007669"/>
    <property type="project" value="UniProtKB-KW"/>
</dbReference>
<dbReference type="GO" id="GO:0008564">
    <property type="term" value="F:protein-exporting ATPase activity"/>
    <property type="evidence" value="ECO:0007669"/>
    <property type="project" value="UniProtKB-EC"/>
</dbReference>
<dbReference type="GO" id="GO:0065002">
    <property type="term" value="P:intracellular protein transmembrane transport"/>
    <property type="evidence" value="ECO:0007669"/>
    <property type="project" value="UniProtKB-UniRule"/>
</dbReference>
<dbReference type="GO" id="GO:0017038">
    <property type="term" value="P:protein import"/>
    <property type="evidence" value="ECO:0007669"/>
    <property type="project" value="InterPro"/>
</dbReference>
<dbReference type="GO" id="GO:0006605">
    <property type="term" value="P:protein targeting"/>
    <property type="evidence" value="ECO:0007669"/>
    <property type="project" value="UniProtKB-UniRule"/>
</dbReference>
<dbReference type="GO" id="GO:0043952">
    <property type="term" value="P:protein transport by the Sec complex"/>
    <property type="evidence" value="ECO:0007669"/>
    <property type="project" value="TreeGrafter"/>
</dbReference>
<dbReference type="CDD" id="cd17928">
    <property type="entry name" value="DEXDc_SecA"/>
    <property type="match status" value="1"/>
</dbReference>
<dbReference type="CDD" id="cd18803">
    <property type="entry name" value="SF2_C_secA"/>
    <property type="match status" value="1"/>
</dbReference>
<dbReference type="FunFam" id="1.10.3060.10:FF:000002">
    <property type="entry name" value="Preprotein translocase subunit SecA"/>
    <property type="match status" value="1"/>
</dbReference>
<dbReference type="FunFam" id="3.40.50.300:FF:000113">
    <property type="entry name" value="Preprotein translocase subunit SecA"/>
    <property type="match status" value="1"/>
</dbReference>
<dbReference type="FunFam" id="3.40.50.300:FF:000334">
    <property type="entry name" value="Protein translocase subunit SecA"/>
    <property type="match status" value="1"/>
</dbReference>
<dbReference type="FunFam" id="3.90.1440.10:FF:000002">
    <property type="entry name" value="Protein translocase subunit SecA"/>
    <property type="match status" value="1"/>
</dbReference>
<dbReference type="Gene3D" id="3.10.450.50">
    <property type="match status" value="1"/>
</dbReference>
<dbReference type="Gene3D" id="1.10.3060.10">
    <property type="entry name" value="Helical scaffold and wing domains of SecA"/>
    <property type="match status" value="1"/>
</dbReference>
<dbReference type="Gene3D" id="3.40.50.300">
    <property type="entry name" value="P-loop containing nucleotide triphosphate hydrolases"/>
    <property type="match status" value="2"/>
</dbReference>
<dbReference type="Gene3D" id="3.90.1440.10">
    <property type="entry name" value="SecA, preprotein cross-linking domain"/>
    <property type="match status" value="1"/>
</dbReference>
<dbReference type="HAMAP" id="MF_01382">
    <property type="entry name" value="SecA"/>
    <property type="match status" value="1"/>
</dbReference>
<dbReference type="InterPro" id="IPR014001">
    <property type="entry name" value="Helicase_ATP-bd"/>
</dbReference>
<dbReference type="InterPro" id="IPR001650">
    <property type="entry name" value="Helicase_C-like"/>
</dbReference>
<dbReference type="InterPro" id="IPR027417">
    <property type="entry name" value="P-loop_NTPase"/>
</dbReference>
<dbReference type="InterPro" id="IPR004027">
    <property type="entry name" value="SEC_C_motif"/>
</dbReference>
<dbReference type="InterPro" id="IPR000185">
    <property type="entry name" value="SecA"/>
</dbReference>
<dbReference type="InterPro" id="IPR020937">
    <property type="entry name" value="SecA_CS"/>
</dbReference>
<dbReference type="InterPro" id="IPR011115">
    <property type="entry name" value="SecA_DEAD"/>
</dbReference>
<dbReference type="InterPro" id="IPR014018">
    <property type="entry name" value="SecA_motor_DEAD"/>
</dbReference>
<dbReference type="InterPro" id="IPR011130">
    <property type="entry name" value="SecA_preprotein_X-link_dom"/>
</dbReference>
<dbReference type="InterPro" id="IPR044722">
    <property type="entry name" value="SecA_SF2_C"/>
</dbReference>
<dbReference type="InterPro" id="IPR011116">
    <property type="entry name" value="SecA_Wing/Scaffold"/>
</dbReference>
<dbReference type="InterPro" id="IPR036266">
    <property type="entry name" value="SecA_Wing/Scaffold_sf"/>
</dbReference>
<dbReference type="InterPro" id="IPR036670">
    <property type="entry name" value="SecA_X-link_sf"/>
</dbReference>
<dbReference type="NCBIfam" id="NF009538">
    <property type="entry name" value="PRK12904.1"/>
    <property type="match status" value="1"/>
</dbReference>
<dbReference type="NCBIfam" id="TIGR00963">
    <property type="entry name" value="secA"/>
    <property type="match status" value="1"/>
</dbReference>
<dbReference type="PANTHER" id="PTHR30612:SF0">
    <property type="entry name" value="CHLOROPLAST PROTEIN-TRANSPORTING ATPASE"/>
    <property type="match status" value="1"/>
</dbReference>
<dbReference type="PANTHER" id="PTHR30612">
    <property type="entry name" value="SECA INNER MEMBRANE COMPONENT OF SEC PROTEIN SECRETION SYSTEM"/>
    <property type="match status" value="1"/>
</dbReference>
<dbReference type="Pfam" id="PF21090">
    <property type="entry name" value="P-loop_SecA"/>
    <property type="match status" value="1"/>
</dbReference>
<dbReference type="Pfam" id="PF02810">
    <property type="entry name" value="SEC-C"/>
    <property type="match status" value="1"/>
</dbReference>
<dbReference type="Pfam" id="PF07517">
    <property type="entry name" value="SecA_DEAD"/>
    <property type="match status" value="1"/>
</dbReference>
<dbReference type="Pfam" id="PF01043">
    <property type="entry name" value="SecA_PP_bind"/>
    <property type="match status" value="1"/>
</dbReference>
<dbReference type="Pfam" id="PF07516">
    <property type="entry name" value="SecA_SW"/>
    <property type="match status" value="1"/>
</dbReference>
<dbReference type="PRINTS" id="PR00906">
    <property type="entry name" value="SECA"/>
</dbReference>
<dbReference type="SMART" id="SM00957">
    <property type="entry name" value="SecA_DEAD"/>
    <property type="match status" value="1"/>
</dbReference>
<dbReference type="SMART" id="SM00958">
    <property type="entry name" value="SecA_PP_bind"/>
    <property type="match status" value="1"/>
</dbReference>
<dbReference type="SUPFAM" id="SSF81886">
    <property type="entry name" value="Helical scaffold and wing domains of SecA"/>
    <property type="match status" value="1"/>
</dbReference>
<dbReference type="SUPFAM" id="SSF52540">
    <property type="entry name" value="P-loop containing nucleoside triphosphate hydrolases"/>
    <property type="match status" value="2"/>
</dbReference>
<dbReference type="SUPFAM" id="SSF81767">
    <property type="entry name" value="Pre-protein crosslinking domain of SecA"/>
    <property type="match status" value="1"/>
</dbReference>
<dbReference type="PROSITE" id="PS01312">
    <property type="entry name" value="SECA"/>
    <property type="match status" value="1"/>
</dbReference>
<dbReference type="PROSITE" id="PS51196">
    <property type="entry name" value="SECA_MOTOR_DEAD"/>
    <property type="match status" value="1"/>
</dbReference>
<organism>
    <name type="scientific">Frankia casuarinae (strain DSM 45818 / CECT 9043 / HFP020203 / CcI3)</name>
    <dbReference type="NCBI Taxonomy" id="106370"/>
    <lineage>
        <taxon>Bacteria</taxon>
        <taxon>Bacillati</taxon>
        <taxon>Actinomycetota</taxon>
        <taxon>Actinomycetes</taxon>
        <taxon>Frankiales</taxon>
        <taxon>Frankiaceae</taxon>
        <taxon>Frankia</taxon>
    </lineage>
</organism>
<keyword id="KW-0067">ATP-binding</keyword>
<keyword id="KW-1003">Cell membrane</keyword>
<keyword id="KW-0963">Cytoplasm</keyword>
<keyword id="KW-0472">Membrane</keyword>
<keyword id="KW-0479">Metal-binding</keyword>
<keyword id="KW-0547">Nucleotide-binding</keyword>
<keyword id="KW-0653">Protein transport</keyword>
<keyword id="KW-1185">Reference proteome</keyword>
<keyword id="KW-1278">Translocase</keyword>
<keyword id="KW-0811">Translocation</keyword>
<keyword id="KW-0813">Transport</keyword>
<keyword id="KW-0862">Zinc</keyword>
<accession>Q2JEZ1</accession>
<proteinExistence type="inferred from homology"/>
<comment type="function">
    <text evidence="1">Part of the Sec protein translocase complex. Interacts with the SecYEG preprotein conducting channel. Has a central role in coupling the hydrolysis of ATP to the transfer of proteins into and across the cell membrane, serving as an ATP-driven molecular motor driving the stepwise translocation of polypeptide chains across the membrane.</text>
</comment>
<comment type="catalytic activity">
    <reaction evidence="1">
        <text>ATP + H2O + cellular proteinSide 1 = ADP + phosphate + cellular proteinSide 2.</text>
        <dbReference type="EC" id="7.4.2.8"/>
    </reaction>
</comment>
<comment type="cofactor">
    <cofactor evidence="1">
        <name>Zn(2+)</name>
        <dbReference type="ChEBI" id="CHEBI:29105"/>
    </cofactor>
    <text evidence="1">May bind 1 zinc ion per subunit.</text>
</comment>
<comment type="subunit">
    <text evidence="1">Monomer and homodimer. Part of the essential Sec protein translocation apparatus which comprises SecA, SecYEG and auxiliary proteins SecDF. Other proteins may also be involved.</text>
</comment>
<comment type="subcellular location">
    <subcellularLocation>
        <location evidence="1">Cell membrane</location>
        <topology evidence="1">Peripheral membrane protein</topology>
        <orientation evidence="1">Cytoplasmic side</orientation>
    </subcellularLocation>
    <subcellularLocation>
        <location evidence="1">Cytoplasm</location>
    </subcellularLocation>
    <text evidence="1">Distribution is 50-50.</text>
</comment>
<comment type="similarity">
    <text evidence="1">Belongs to the SecA family.</text>
</comment>
<evidence type="ECO:0000255" key="1">
    <source>
        <dbReference type="HAMAP-Rule" id="MF_01382"/>
    </source>
</evidence>
<evidence type="ECO:0000256" key="2">
    <source>
        <dbReference type="SAM" id="MobiDB-lite"/>
    </source>
</evidence>
<feature type="chain" id="PRO_0000318353" description="Protein translocase subunit SecA">
    <location>
        <begin position="1"/>
        <end position="994"/>
    </location>
</feature>
<feature type="region of interest" description="Disordered" evidence="2">
    <location>
        <begin position="868"/>
        <end position="994"/>
    </location>
</feature>
<feature type="compositionally biased region" description="Low complexity" evidence="2">
    <location>
        <begin position="868"/>
        <end position="888"/>
    </location>
</feature>
<feature type="compositionally biased region" description="Pro residues" evidence="2">
    <location>
        <begin position="889"/>
        <end position="900"/>
    </location>
</feature>
<feature type="compositionally biased region" description="Basic and acidic residues" evidence="2">
    <location>
        <begin position="984"/>
        <end position="994"/>
    </location>
</feature>
<feature type="binding site" evidence="1">
    <location>
        <position position="85"/>
    </location>
    <ligand>
        <name>ATP</name>
        <dbReference type="ChEBI" id="CHEBI:30616"/>
    </ligand>
</feature>
<feature type="binding site" evidence="1">
    <location>
        <begin position="103"/>
        <end position="107"/>
    </location>
    <ligand>
        <name>ATP</name>
        <dbReference type="ChEBI" id="CHEBI:30616"/>
    </ligand>
</feature>
<feature type="binding site" evidence="1">
    <location>
        <position position="492"/>
    </location>
    <ligand>
        <name>ATP</name>
        <dbReference type="ChEBI" id="CHEBI:30616"/>
    </ligand>
</feature>
<feature type="binding site" evidence="1">
    <location>
        <position position="973"/>
    </location>
    <ligand>
        <name>Zn(2+)</name>
        <dbReference type="ChEBI" id="CHEBI:29105"/>
    </ligand>
</feature>
<feature type="binding site" evidence="1">
    <location>
        <position position="975"/>
    </location>
    <ligand>
        <name>Zn(2+)</name>
        <dbReference type="ChEBI" id="CHEBI:29105"/>
    </ligand>
</feature>
<feature type="binding site" evidence="1">
    <location>
        <position position="984"/>
    </location>
    <ligand>
        <name>Zn(2+)</name>
        <dbReference type="ChEBI" id="CHEBI:29105"/>
    </ligand>
</feature>
<feature type="binding site" evidence="1">
    <location>
        <position position="985"/>
    </location>
    <ligand>
        <name>Zn(2+)</name>
        <dbReference type="ChEBI" id="CHEBI:29105"/>
    </ligand>
</feature>
<reference key="1">
    <citation type="journal article" date="2007" name="Genome Res.">
        <title>Genome characteristics of facultatively symbiotic Frankia sp. strains reflect host range and host plant biogeography.</title>
        <authorList>
            <person name="Normand P."/>
            <person name="Lapierre P."/>
            <person name="Tisa L.S."/>
            <person name="Gogarten J.P."/>
            <person name="Alloisio N."/>
            <person name="Bagnarol E."/>
            <person name="Bassi C.A."/>
            <person name="Berry A.M."/>
            <person name="Bickhart D.M."/>
            <person name="Choisne N."/>
            <person name="Couloux A."/>
            <person name="Cournoyer B."/>
            <person name="Cruveiller S."/>
            <person name="Daubin V."/>
            <person name="Demange N."/>
            <person name="Francino M.P."/>
            <person name="Goltsman E."/>
            <person name="Huang Y."/>
            <person name="Kopp O.R."/>
            <person name="Labarre L."/>
            <person name="Lapidus A."/>
            <person name="Lavire C."/>
            <person name="Marechal J."/>
            <person name="Martinez M."/>
            <person name="Mastronunzio J.E."/>
            <person name="Mullin B.C."/>
            <person name="Niemann J."/>
            <person name="Pujic P."/>
            <person name="Rawnsley T."/>
            <person name="Rouy Z."/>
            <person name="Schenowitz C."/>
            <person name="Sellstedt A."/>
            <person name="Tavares F."/>
            <person name="Tomkins J.P."/>
            <person name="Vallenet D."/>
            <person name="Valverde C."/>
            <person name="Wall L.G."/>
            <person name="Wang Y."/>
            <person name="Medigue C."/>
            <person name="Benson D.R."/>
        </authorList>
    </citation>
    <scope>NUCLEOTIDE SEQUENCE [LARGE SCALE GENOMIC DNA]</scope>
    <source>
        <strain>DSM 45818 / CECT 9043 / HFP020203 / CcI3</strain>
    </source>
</reference>
<gene>
    <name evidence="1" type="primary">secA</name>
    <name type="ordered locus">Francci3_0767</name>
</gene>
<name>SECA_FRACC</name>